<protein>
    <recommendedName>
        <fullName evidence="1">ATP phosphoribosyltransferase regulatory subunit</fullName>
    </recommendedName>
</protein>
<evidence type="ECO:0000255" key="1">
    <source>
        <dbReference type="HAMAP-Rule" id="MF_00125"/>
    </source>
</evidence>
<name>HISZ_NEIMF</name>
<sequence>MQTWQLPEHIADVLPTNARQLESAREQLLALFRVHGYELVQPPLMEYAHSLLTHIDAGLSLKTILVTDRLSGRQLGIRADITPQVARIDAHLLSANQGINRLCYAGPVLHAQPDGLLNMREPLQAGAEMYGFADIRGDIELIDLMLKSMKIADMGKVLLSLGHIGIFRALSDAAHLDAGQSATLLALMQDKDTGTVEAQVKAWKLDGMWAKAFSLLPRLYGGREVLSDARGRLPDLSAVGGALDELQAVCDAFPDCEIHIDLSELRVDNYHTGLLYAAYAADFHDAVARGGRYDGLGGYFGRARPATGFSFDLRSFIGRLPTSERQPAVLVDAEDAEAAREAVEALREQGQCVVIDYGIGHNVSEELAGRLKKTDGVWQVVKR</sequence>
<organism>
    <name type="scientific">Neisseria meningitidis serogroup C / serotype 2a (strain ATCC 700532 / DSM 15464 / FAM18)</name>
    <dbReference type="NCBI Taxonomy" id="272831"/>
    <lineage>
        <taxon>Bacteria</taxon>
        <taxon>Pseudomonadati</taxon>
        <taxon>Pseudomonadota</taxon>
        <taxon>Betaproteobacteria</taxon>
        <taxon>Neisseriales</taxon>
        <taxon>Neisseriaceae</taxon>
        <taxon>Neisseria</taxon>
    </lineage>
</organism>
<reference key="1">
    <citation type="journal article" date="2007" name="PLoS Genet.">
        <title>Meningococcal genetic variation mechanisms viewed through comparative analysis of serogroup C strain FAM18.</title>
        <authorList>
            <person name="Bentley S.D."/>
            <person name="Vernikos G.S."/>
            <person name="Snyder L.A.S."/>
            <person name="Churcher C."/>
            <person name="Arrowsmith C."/>
            <person name="Chillingworth T."/>
            <person name="Cronin A."/>
            <person name="Davis P.H."/>
            <person name="Holroyd N.E."/>
            <person name="Jagels K."/>
            <person name="Maddison M."/>
            <person name="Moule S."/>
            <person name="Rabbinowitsch E."/>
            <person name="Sharp S."/>
            <person name="Unwin L."/>
            <person name="Whitehead S."/>
            <person name="Quail M.A."/>
            <person name="Achtman M."/>
            <person name="Barrell B.G."/>
            <person name="Saunders N.J."/>
            <person name="Parkhill J."/>
        </authorList>
    </citation>
    <scope>NUCLEOTIDE SEQUENCE [LARGE SCALE GENOMIC DNA]</scope>
    <source>
        <strain>ATCC 700532 / DSM 15464 / FAM18</strain>
    </source>
</reference>
<gene>
    <name evidence="1" type="primary">hisZ</name>
    <name type="ordered locus">NMC0764</name>
</gene>
<comment type="function">
    <text evidence="1">Required for the first step of histidine biosynthesis. May allow the feedback regulation of ATP phosphoribosyltransferase activity by histidine.</text>
</comment>
<comment type="pathway">
    <text evidence="1">Amino-acid biosynthesis; L-histidine biosynthesis; L-histidine from 5-phospho-alpha-D-ribose 1-diphosphate: step 1/9.</text>
</comment>
<comment type="subunit">
    <text evidence="1">Heteromultimer composed of HisG and HisZ subunits.</text>
</comment>
<comment type="subcellular location">
    <subcellularLocation>
        <location evidence="1">Cytoplasm</location>
    </subcellularLocation>
</comment>
<comment type="miscellaneous">
    <text>This function is generally fulfilled by the C-terminal part of HisG, which is missing in some bacteria such as this one.</text>
</comment>
<comment type="similarity">
    <text evidence="1">Belongs to the class-II aminoacyl-tRNA synthetase family. HisZ subfamily.</text>
</comment>
<accession>A1KT70</accession>
<dbReference type="EMBL" id="AM421808">
    <property type="protein sequence ID" value="CAM10052.1"/>
    <property type="molecule type" value="Genomic_DNA"/>
</dbReference>
<dbReference type="RefSeq" id="WP_002219501.1">
    <property type="nucleotide sequence ID" value="NC_008767.1"/>
</dbReference>
<dbReference type="SMR" id="A1KT70"/>
<dbReference type="KEGG" id="nmc:NMC0764"/>
<dbReference type="HOGENOM" id="CLU_025113_0_1_4"/>
<dbReference type="UniPathway" id="UPA00031">
    <property type="reaction ID" value="UER00006"/>
</dbReference>
<dbReference type="Proteomes" id="UP000002286">
    <property type="component" value="Chromosome"/>
</dbReference>
<dbReference type="GO" id="GO:0005737">
    <property type="term" value="C:cytoplasm"/>
    <property type="evidence" value="ECO:0007669"/>
    <property type="project" value="UniProtKB-SubCell"/>
</dbReference>
<dbReference type="GO" id="GO:0004821">
    <property type="term" value="F:histidine-tRNA ligase activity"/>
    <property type="evidence" value="ECO:0007669"/>
    <property type="project" value="TreeGrafter"/>
</dbReference>
<dbReference type="GO" id="GO:0006427">
    <property type="term" value="P:histidyl-tRNA aminoacylation"/>
    <property type="evidence" value="ECO:0007669"/>
    <property type="project" value="TreeGrafter"/>
</dbReference>
<dbReference type="GO" id="GO:0000105">
    <property type="term" value="P:L-histidine biosynthetic process"/>
    <property type="evidence" value="ECO:0007669"/>
    <property type="project" value="UniProtKB-UniRule"/>
</dbReference>
<dbReference type="FunFam" id="3.30.930.10:FF:000096">
    <property type="entry name" value="ATP phosphoribosyltransferase regulatory subunit"/>
    <property type="match status" value="1"/>
</dbReference>
<dbReference type="Gene3D" id="3.30.930.10">
    <property type="entry name" value="Bira Bifunctional Protein, Domain 2"/>
    <property type="match status" value="1"/>
</dbReference>
<dbReference type="HAMAP" id="MF_00125">
    <property type="entry name" value="HisZ"/>
    <property type="match status" value="1"/>
</dbReference>
<dbReference type="InterPro" id="IPR045864">
    <property type="entry name" value="aa-tRNA-synth_II/BPL/LPL"/>
</dbReference>
<dbReference type="InterPro" id="IPR041715">
    <property type="entry name" value="HisRS-like_core"/>
</dbReference>
<dbReference type="InterPro" id="IPR004516">
    <property type="entry name" value="HisRS/HisZ"/>
</dbReference>
<dbReference type="InterPro" id="IPR004517">
    <property type="entry name" value="HisZ"/>
</dbReference>
<dbReference type="NCBIfam" id="NF008935">
    <property type="entry name" value="PRK12292.1-1"/>
    <property type="match status" value="1"/>
</dbReference>
<dbReference type="NCBIfam" id="NF009086">
    <property type="entry name" value="PRK12421.1"/>
    <property type="match status" value="1"/>
</dbReference>
<dbReference type="PANTHER" id="PTHR43707:SF1">
    <property type="entry name" value="HISTIDINE--TRNA LIGASE, MITOCHONDRIAL-RELATED"/>
    <property type="match status" value="1"/>
</dbReference>
<dbReference type="PANTHER" id="PTHR43707">
    <property type="entry name" value="HISTIDYL-TRNA SYNTHETASE"/>
    <property type="match status" value="1"/>
</dbReference>
<dbReference type="Pfam" id="PF13393">
    <property type="entry name" value="tRNA-synt_His"/>
    <property type="match status" value="1"/>
</dbReference>
<dbReference type="PIRSF" id="PIRSF001549">
    <property type="entry name" value="His-tRNA_synth"/>
    <property type="match status" value="1"/>
</dbReference>
<dbReference type="SUPFAM" id="SSF55681">
    <property type="entry name" value="Class II aaRS and biotin synthetases"/>
    <property type="match status" value="1"/>
</dbReference>
<keyword id="KW-0028">Amino-acid biosynthesis</keyword>
<keyword id="KW-0963">Cytoplasm</keyword>
<keyword id="KW-0368">Histidine biosynthesis</keyword>
<feature type="chain" id="PRO_1000016271" description="ATP phosphoribosyltransferase regulatory subunit">
    <location>
        <begin position="1"/>
        <end position="383"/>
    </location>
</feature>
<proteinExistence type="inferred from homology"/>